<feature type="chain" id="PRO_0000049194" description="Homeobox protein Mix.2">
    <location>
        <begin position="1"/>
        <end position="369"/>
    </location>
</feature>
<feature type="DNA-binding region" description="Homeobox" evidence="2">
    <location>
        <begin position="94"/>
        <end position="153"/>
    </location>
</feature>
<feature type="region of interest" description="Disordered" evidence="3">
    <location>
        <begin position="39"/>
        <end position="94"/>
    </location>
</feature>
<feature type="region of interest" description="Disordered" evidence="3">
    <location>
        <begin position="153"/>
        <end position="194"/>
    </location>
</feature>
<feature type="region of interest" description="Disordered" evidence="3">
    <location>
        <begin position="324"/>
        <end position="362"/>
    </location>
</feature>
<feature type="compositionally biased region" description="Basic and acidic residues" evidence="3">
    <location>
        <begin position="68"/>
        <end position="84"/>
    </location>
</feature>
<feature type="compositionally biased region" description="Polar residues" evidence="3">
    <location>
        <begin position="179"/>
        <end position="193"/>
    </location>
</feature>
<feature type="compositionally biased region" description="Polar residues" evidence="3">
    <location>
        <begin position="338"/>
        <end position="355"/>
    </location>
</feature>
<keyword id="KW-0217">Developmental protein</keyword>
<keyword id="KW-0238">DNA-binding</keyword>
<keyword id="KW-0371">Homeobox</keyword>
<keyword id="KW-0539">Nucleus</keyword>
<keyword id="KW-1185">Reference proteome</keyword>
<proteinExistence type="evidence at transcript level"/>
<sequence length="369" mass="41537">MNGFSQQLEDFYPSYFSPSPLGFSEPEVQPVAMNLVPTIQKDIQQQPNRKEVTKIPRASEQSPVQNVRPKEAINTKEADSRNPEPDSSLVSASQRRKRTFFTQAQLDILEQFFQTNMYPDIHHREELARHIYIPESRIQVWFQNRRAKVRRQGAKATKPALASHHYSSTSGAMFPSAPAPNSSSYQMTSSRAQVQPPKEYQLNKFHQSQGFLSYPDSSSDVSRQRFLLSQATPGVYHLPQASSNVYDQNVKSNDPLWGQQQVYTNMESVLNLSRRPQQMPAQPMFMNSFQTNKIIKSKMDTTSPPIPVSTTSSHHSQMSLFAGQDPCHMSTAPGGTYGQISPISDSGVSDTSPEPSSDWEENVSVLLHL</sequence>
<comment type="function">
    <text evidence="1">May be a transcription factor which play a regulatory role in the development of the embryo.</text>
</comment>
<comment type="subcellular location">
    <subcellularLocation>
        <location evidence="4">Nucleus</location>
    </subcellularLocation>
</comment>
<comment type="induction">
    <text>By activin and TGF-beta1 (immediate early response gene).</text>
</comment>
<comment type="similarity">
    <text evidence="4">Belongs to the paired homeobox family.</text>
</comment>
<name>MIX2_XENLA</name>
<evidence type="ECO:0000250" key="1"/>
<evidence type="ECO:0000255" key="2">
    <source>
        <dbReference type="PROSITE-ProRule" id="PRU00108"/>
    </source>
</evidence>
<evidence type="ECO:0000256" key="3">
    <source>
        <dbReference type="SAM" id="MobiDB-lite"/>
    </source>
</evidence>
<evidence type="ECO:0000305" key="4"/>
<dbReference type="EMBL" id="U50745">
    <property type="protein sequence ID" value="AAC60020.1"/>
    <property type="molecule type" value="mRNA"/>
</dbReference>
<dbReference type="RefSeq" id="NP_001081094.1">
    <property type="nucleotide sequence ID" value="NM_001087625.1"/>
</dbReference>
<dbReference type="SMR" id="Q91685"/>
<dbReference type="GeneID" id="394379"/>
<dbReference type="KEGG" id="xla:394379"/>
<dbReference type="AGR" id="Xenbase:XB-GENE-6254430"/>
<dbReference type="CTD" id="394379"/>
<dbReference type="Xenbase" id="XB-GENE-6254430">
    <property type="gene designation" value="mix1.L"/>
</dbReference>
<dbReference type="OrthoDB" id="6159439at2759"/>
<dbReference type="Proteomes" id="UP000186698">
    <property type="component" value="Chromosome 5L"/>
</dbReference>
<dbReference type="Bgee" id="394379">
    <property type="expression patterns" value="Expressed in gastrula and 2 other cell types or tissues"/>
</dbReference>
<dbReference type="GO" id="GO:0005634">
    <property type="term" value="C:nucleus"/>
    <property type="evidence" value="ECO:0000318"/>
    <property type="project" value="GO_Central"/>
</dbReference>
<dbReference type="GO" id="GO:0000981">
    <property type="term" value="F:DNA-binding transcription factor activity, RNA polymerase II-specific"/>
    <property type="evidence" value="ECO:0000318"/>
    <property type="project" value="GO_Central"/>
</dbReference>
<dbReference type="GO" id="GO:0000977">
    <property type="term" value="F:RNA polymerase II transcription regulatory region sequence-specific DNA binding"/>
    <property type="evidence" value="ECO:0000318"/>
    <property type="project" value="GO_Central"/>
</dbReference>
<dbReference type="GO" id="GO:0006357">
    <property type="term" value="P:regulation of transcription by RNA polymerase II"/>
    <property type="evidence" value="ECO:0000318"/>
    <property type="project" value="GO_Central"/>
</dbReference>
<dbReference type="CDD" id="cd00086">
    <property type="entry name" value="homeodomain"/>
    <property type="match status" value="1"/>
</dbReference>
<dbReference type="FunFam" id="1.10.10.60:FF:000312">
    <property type="entry name" value="Mix-type homeobox gene 1"/>
    <property type="match status" value="1"/>
</dbReference>
<dbReference type="Gene3D" id="1.10.10.60">
    <property type="entry name" value="Homeodomain-like"/>
    <property type="match status" value="1"/>
</dbReference>
<dbReference type="InterPro" id="IPR001356">
    <property type="entry name" value="HD"/>
</dbReference>
<dbReference type="InterPro" id="IPR017970">
    <property type="entry name" value="Homeobox_CS"/>
</dbReference>
<dbReference type="InterPro" id="IPR051306">
    <property type="entry name" value="Homeobox_regulator"/>
</dbReference>
<dbReference type="InterPro" id="IPR009057">
    <property type="entry name" value="Homeodomain-like_sf"/>
</dbReference>
<dbReference type="PANTHER" id="PTHR46123:SF10">
    <property type="entry name" value="HOMEOBOX PROTEIN MIX.2"/>
    <property type="match status" value="1"/>
</dbReference>
<dbReference type="PANTHER" id="PTHR46123">
    <property type="entry name" value="MIX-TYPE HOMEOBOX GENE 1-RELATED"/>
    <property type="match status" value="1"/>
</dbReference>
<dbReference type="Pfam" id="PF00046">
    <property type="entry name" value="Homeodomain"/>
    <property type="match status" value="1"/>
</dbReference>
<dbReference type="SMART" id="SM00389">
    <property type="entry name" value="HOX"/>
    <property type="match status" value="1"/>
</dbReference>
<dbReference type="SUPFAM" id="SSF46689">
    <property type="entry name" value="Homeodomain-like"/>
    <property type="match status" value="1"/>
</dbReference>
<dbReference type="PROSITE" id="PS00027">
    <property type="entry name" value="HOMEOBOX_1"/>
    <property type="match status" value="1"/>
</dbReference>
<dbReference type="PROSITE" id="PS50071">
    <property type="entry name" value="HOMEOBOX_2"/>
    <property type="match status" value="1"/>
</dbReference>
<protein>
    <recommendedName>
        <fullName>Homeobox protein Mix.2</fullName>
    </recommendedName>
</protein>
<accession>Q91685</accession>
<gene>
    <name type="primary">mix-b</name>
    <name type="synonym">mix2</name>
</gene>
<reference key="1">
    <citation type="journal article" date="1996" name="Dev. Biol.">
        <title>DNA sequences mediating the transcriptional response of the Mix.2 homeobox gene to mesoderm induction.</title>
        <authorList>
            <person name="Vize P.D."/>
        </authorList>
    </citation>
    <scope>NUCLEOTIDE SEQUENCE [MRNA]</scope>
</reference>
<organism>
    <name type="scientific">Xenopus laevis</name>
    <name type="common">African clawed frog</name>
    <dbReference type="NCBI Taxonomy" id="8355"/>
    <lineage>
        <taxon>Eukaryota</taxon>
        <taxon>Metazoa</taxon>
        <taxon>Chordata</taxon>
        <taxon>Craniata</taxon>
        <taxon>Vertebrata</taxon>
        <taxon>Euteleostomi</taxon>
        <taxon>Amphibia</taxon>
        <taxon>Batrachia</taxon>
        <taxon>Anura</taxon>
        <taxon>Pipoidea</taxon>
        <taxon>Pipidae</taxon>
        <taxon>Xenopodinae</taxon>
        <taxon>Xenopus</taxon>
        <taxon>Xenopus</taxon>
    </lineage>
</organism>